<dbReference type="EC" id="5.3.3.2" evidence="1"/>
<dbReference type="EMBL" id="AJ431696">
    <property type="protein sequence ID" value="CAD24419.1"/>
    <property type="molecule type" value="Genomic_DNA"/>
</dbReference>
<dbReference type="SMR" id="Q8L1I4"/>
<dbReference type="GO" id="GO:0005737">
    <property type="term" value="C:cytoplasm"/>
    <property type="evidence" value="ECO:0007669"/>
    <property type="project" value="UniProtKB-SubCell"/>
</dbReference>
<dbReference type="GO" id="GO:0010181">
    <property type="term" value="F:FMN binding"/>
    <property type="evidence" value="ECO:0007669"/>
    <property type="project" value="UniProtKB-UniRule"/>
</dbReference>
<dbReference type="GO" id="GO:0004452">
    <property type="term" value="F:isopentenyl-diphosphate delta-isomerase activity"/>
    <property type="evidence" value="ECO:0007669"/>
    <property type="project" value="UniProtKB-UniRule"/>
</dbReference>
<dbReference type="GO" id="GO:0000287">
    <property type="term" value="F:magnesium ion binding"/>
    <property type="evidence" value="ECO:0007669"/>
    <property type="project" value="UniProtKB-UniRule"/>
</dbReference>
<dbReference type="GO" id="GO:0070402">
    <property type="term" value="F:NADPH binding"/>
    <property type="evidence" value="ECO:0007669"/>
    <property type="project" value="UniProtKB-UniRule"/>
</dbReference>
<dbReference type="GO" id="GO:0016491">
    <property type="term" value="F:oxidoreductase activity"/>
    <property type="evidence" value="ECO:0007669"/>
    <property type="project" value="InterPro"/>
</dbReference>
<dbReference type="GO" id="GO:0008299">
    <property type="term" value="P:isoprenoid biosynthetic process"/>
    <property type="evidence" value="ECO:0007669"/>
    <property type="project" value="UniProtKB-UniRule"/>
</dbReference>
<dbReference type="CDD" id="cd02811">
    <property type="entry name" value="IDI-2_FMN"/>
    <property type="match status" value="1"/>
</dbReference>
<dbReference type="Gene3D" id="3.20.20.70">
    <property type="entry name" value="Aldolase class I"/>
    <property type="match status" value="1"/>
</dbReference>
<dbReference type="HAMAP" id="MF_00354">
    <property type="entry name" value="Idi_2"/>
    <property type="match status" value="1"/>
</dbReference>
<dbReference type="InterPro" id="IPR013785">
    <property type="entry name" value="Aldolase_TIM"/>
</dbReference>
<dbReference type="InterPro" id="IPR000262">
    <property type="entry name" value="FMN-dep_DH"/>
</dbReference>
<dbReference type="InterPro" id="IPR011179">
    <property type="entry name" value="IPdP_isomerase"/>
</dbReference>
<dbReference type="NCBIfam" id="TIGR02151">
    <property type="entry name" value="IPP_isom_2"/>
    <property type="match status" value="1"/>
</dbReference>
<dbReference type="PANTHER" id="PTHR43665">
    <property type="entry name" value="ISOPENTENYL-DIPHOSPHATE DELTA-ISOMERASE"/>
    <property type="match status" value="1"/>
</dbReference>
<dbReference type="PANTHER" id="PTHR43665:SF1">
    <property type="entry name" value="ISOPENTENYL-DIPHOSPHATE DELTA-ISOMERASE"/>
    <property type="match status" value="1"/>
</dbReference>
<dbReference type="Pfam" id="PF01070">
    <property type="entry name" value="FMN_dh"/>
    <property type="match status" value="2"/>
</dbReference>
<dbReference type="PIRSF" id="PIRSF003314">
    <property type="entry name" value="IPP_isomerase"/>
    <property type="match status" value="1"/>
</dbReference>
<dbReference type="SUPFAM" id="SSF51395">
    <property type="entry name" value="FMN-linked oxidoreductases"/>
    <property type="match status" value="1"/>
</dbReference>
<proteinExistence type="inferred from homology"/>
<reference key="1">
    <citation type="submission" date="2002-02" db="EMBL/GenBank/DDBJ databases">
        <title>Genetics of isoprenoid biosynthesis in Paracoccus zeaxanthinifaciens.</title>
        <authorList>
            <person name="Huembelin M."/>
        </authorList>
    </citation>
    <scope>NUCLEOTIDE SEQUENCE [GENOMIC DNA]</scope>
    <source>
        <strain>R114</strain>
    </source>
</reference>
<evidence type="ECO:0000255" key="1">
    <source>
        <dbReference type="HAMAP-Rule" id="MF_00354"/>
    </source>
</evidence>
<keyword id="KW-0963">Cytoplasm</keyword>
<keyword id="KW-0285">Flavoprotein</keyword>
<keyword id="KW-0288">FMN</keyword>
<keyword id="KW-0413">Isomerase</keyword>
<keyword id="KW-0414">Isoprene biosynthesis</keyword>
<keyword id="KW-0460">Magnesium</keyword>
<keyword id="KW-0479">Metal-binding</keyword>
<keyword id="KW-0521">NADP</keyword>
<organism>
    <name type="scientific">Paracoccus zeaxanthinifaciens</name>
    <dbReference type="NCBI Taxonomy" id="187400"/>
    <lineage>
        <taxon>Bacteria</taxon>
        <taxon>Pseudomonadati</taxon>
        <taxon>Pseudomonadota</taxon>
        <taxon>Alphaproteobacteria</taxon>
        <taxon>Rhodobacterales</taxon>
        <taxon>Paracoccaceae</taxon>
        <taxon>Paracoccus</taxon>
    </lineage>
</organism>
<gene>
    <name evidence="1" type="primary">fni</name>
    <name type="synonym">idi</name>
</gene>
<accession>Q8L1I4</accession>
<sequence>MTDSKDHHVAGRKLDHLRALDDDADIDRGDSGFDRIALTHRALPEVDFDAIDTATSFLGRELSFPLLISSMTGGTGEEIERINRNLAAGAEEARVAMAVGSQRVMFTDPSARASFDLRAHAPTVPLLANIGAVQLNMGLGLKECLAAIEVLQADGLYLHLNPLQEAVQPEGDRDFADLGSKIAAIARDVPVPVLLKEVGCGLSAADIAIGLRAGIRHFDVAGRGGTSWSRIEYRRRQRADDDLGLVFQDWGLQTVDALREARPALAAHDGTSVLIASGGIRNGVDMAKCVILGADMCGVAAPLLKAAQNSREAVVSAIRKLHLEFRTAMFLLGCGTLADLKDNSSLIRQ</sequence>
<protein>
    <recommendedName>
        <fullName evidence="1">Isopentenyl-diphosphate delta-isomerase</fullName>
        <shortName evidence="1">IPP isomerase</shortName>
        <ecNumber evidence="1">5.3.3.2</ecNumber>
    </recommendedName>
    <alternativeName>
        <fullName evidence="1">Isopentenyl diphosphate:dimethylallyl diphosphate isomerase</fullName>
    </alternativeName>
    <alternativeName>
        <fullName evidence="1">Isopentenyl pyrophosphate isomerase</fullName>
    </alternativeName>
    <alternativeName>
        <fullName evidence="1">Type 2 isopentenyl diphosphate isomerase</fullName>
        <shortName evidence="1">IDI-2</shortName>
    </alternativeName>
</protein>
<name>IDI2_PARZE</name>
<feature type="chain" id="PRO_0000134416" description="Isopentenyl-diphosphate delta-isomerase">
    <location>
        <begin position="1"/>
        <end position="349"/>
    </location>
</feature>
<feature type="binding site" evidence="1">
    <location>
        <begin position="12"/>
        <end position="13"/>
    </location>
    <ligand>
        <name>substrate</name>
    </ligand>
</feature>
<feature type="binding site" evidence="1">
    <location>
        <position position="69"/>
    </location>
    <ligand>
        <name>FMN</name>
        <dbReference type="ChEBI" id="CHEBI:58210"/>
    </ligand>
</feature>
<feature type="binding site" evidence="1">
    <location>
        <begin position="70"/>
        <end position="72"/>
    </location>
    <ligand>
        <name>FMN</name>
        <dbReference type="ChEBI" id="CHEBI:58210"/>
    </ligand>
</feature>
<feature type="binding site" evidence="1">
    <location>
        <begin position="101"/>
        <end position="103"/>
    </location>
    <ligand>
        <name>substrate</name>
    </ligand>
</feature>
<feature type="binding site" evidence="1">
    <location>
        <position position="101"/>
    </location>
    <ligand>
        <name>FMN</name>
        <dbReference type="ChEBI" id="CHEBI:58210"/>
    </ligand>
</feature>
<feature type="binding site" evidence="1">
    <location>
        <position position="129"/>
    </location>
    <ligand>
        <name>FMN</name>
        <dbReference type="ChEBI" id="CHEBI:58210"/>
    </ligand>
</feature>
<feature type="binding site" evidence="1">
    <location>
        <position position="164"/>
    </location>
    <ligand>
        <name>substrate</name>
    </ligand>
</feature>
<feature type="binding site" evidence="1">
    <location>
        <position position="165"/>
    </location>
    <ligand>
        <name>Mg(2+)</name>
        <dbReference type="ChEBI" id="CHEBI:18420"/>
    </ligand>
</feature>
<feature type="binding site" evidence="1">
    <location>
        <position position="196"/>
    </location>
    <ligand>
        <name>FMN</name>
        <dbReference type="ChEBI" id="CHEBI:58210"/>
    </ligand>
</feature>
<feature type="binding site" evidence="1">
    <location>
        <position position="226"/>
    </location>
    <ligand>
        <name>FMN</name>
        <dbReference type="ChEBI" id="CHEBI:58210"/>
    </ligand>
</feature>
<feature type="binding site" evidence="1">
    <location>
        <begin position="279"/>
        <end position="281"/>
    </location>
    <ligand>
        <name>FMN</name>
        <dbReference type="ChEBI" id="CHEBI:58210"/>
    </ligand>
</feature>
<feature type="binding site" evidence="1">
    <location>
        <begin position="300"/>
        <end position="301"/>
    </location>
    <ligand>
        <name>FMN</name>
        <dbReference type="ChEBI" id="CHEBI:58210"/>
    </ligand>
</feature>
<comment type="function">
    <text evidence="1">Involved in the biosynthesis of isoprenoids. Catalyzes the 1,3-allylic rearrangement of the homoallylic substrate isopentenyl (IPP) to its allylic isomer, dimethylallyl diphosphate (DMAPP).</text>
</comment>
<comment type="catalytic activity">
    <reaction evidence="1">
        <text>isopentenyl diphosphate = dimethylallyl diphosphate</text>
        <dbReference type="Rhea" id="RHEA:23284"/>
        <dbReference type="ChEBI" id="CHEBI:57623"/>
        <dbReference type="ChEBI" id="CHEBI:128769"/>
        <dbReference type="EC" id="5.3.3.2"/>
    </reaction>
</comment>
<comment type="cofactor">
    <cofactor evidence="1">
        <name>FMN</name>
        <dbReference type="ChEBI" id="CHEBI:58210"/>
    </cofactor>
</comment>
<comment type="cofactor">
    <cofactor evidence="1">
        <name>NADPH</name>
        <dbReference type="ChEBI" id="CHEBI:57783"/>
    </cofactor>
</comment>
<comment type="cofactor">
    <cofactor evidence="1">
        <name>Mg(2+)</name>
        <dbReference type="ChEBI" id="CHEBI:18420"/>
    </cofactor>
</comment>
<comment type="subunit">
    <text evidence="1">Homooctamer. Dimer of tetramers.</text>
</comment>
<comment type="subcellular location">
    <subcellularLocation>
        <location evidence="1">Cytoplasm</location>
    </subcellularLocation>
</comment>
<comment type="similarity">
    <text evidence="1">Belongs to the IPP isomerase type 2 family.</text>
</comment>